<reference key="1">
    <citation type="journal article" date="1995" name="DNA Res.">
        <title>Sequence analysis of the genome of the unicellular cyanobacterium Synechocystis sp. strain PCC6803. I. Sequence features in the 1 Mb region from map positions 64% to 92% of the genome.</title>
        <authorList>
            <person name="Kaneko T."/>
            <person name="Tanaka A."/>
            <person name="Sato S."/>
            <person name="Kotani H."/>
            <person name="Sazuka T."/>
            <person name="Miyajima N."/>
            <person name="Sugiura M."/>
            <person name="Tabata S."/>
        </authorList>
    </citation>
    <scope>NUCLEOTIDE SEQUENCE [LARGE SCALE GENOMIC DNA]</scope>
    <source>
        <strain>ATCC 27184 / PCC 6803 / N-1</strain>
    </source>
</reference>
<reference key="2">
    <citation type="journal article" date="1996" name="DNA Res.">
        <title>Sequence analysis of the genome of the unicellular cyanobacterium Synechocystis sp. strain PCC6803. II. Sequence determination of the entire genome and assignment of potential protein-coding regions.</title>
        <authorList>
            <person name="Kaneko T."/>
            <person name="Sato S."/>
            <person name="Kotani H."/>
            <person name="Tanaka A."/>
            <person name="Asamizu E."/>
            <person name="Nakamura Y."/>
            <person name="Miyajima N."/>
            <person name="Hirosawa M."/>
            <person name="Sugiura M."/>
            <person name="Sasamoto S."/>
            <person name="Kimura T."/>
            <person name="Hosouchi T."/>
            <person name="Matsuno A."/>
            <person name="Muraki A."/>
            <person name="Nakazaki N."/>
            <person name="Naruo K."/>
            <person name="Okumura S."/>
            <person name="Shimpo S."/>
            <person name="Takeuchi C."/>
            <person name="Wada T."/>
            <person name="Watanabe A."/>
            <person name="Yamada M."/>
            <person name="Yasuda M."/>
            <person name="Tabata S."/>
        </authorList>
    </citation>
    <scope>NUCLEOTIDE SEQUENCE [LARGE SCALE GENOMIC DNA]</scope>
    <source>
        <strain>ATCC 27184 / PCC 6803 / Kazusa</strain>
    </source>
</reference>
<sequence>MTDLGQAGESLVAAWLEQQGGKILQQRWRSPWGEIDLITHFPDTKIIAFVEVKTRSGGNWDQGGLLAVNARKQEKIWQTANHFLASQPQWSDWNCRFDVMIVFSQGSVPTGENAEGKFANLPTNFQMGQTIVWQGYRLRLEQYLTDAFGG</sequence>
<organism>
    <name type="scientific">Synechocystis sp. (strain ATCC 27184 / PCC 6803 / Kazusa)</name>
    <dbReference type="NCBI Taxonomy" id="1111708"/>
    <lineage>
        <taxon>Bacteria</taxon>
        <taxon>Bacillati</taxon>
        <taxon>Cyanobacteriota</taxon>
        <taxon>Cyanophyceae</taxon>
        <taxon>Synechococcales</taxon>
        <taxon>Merismopediaceae</taxon>
        <taxon>Synechocystis</taxon>
    </lineage>
</organism>
<proteinExistence type="inferred from homology"/>
<feature type="chain" id="PRO_0000167382" description="UPF0102 protein sll0189">
    <location>
        <begin position="1"/>
        <end position="150"/>
    </location>
</feature>
<name>Y189_SYNY3</name>
<accession>Q55761</accession>
<keyword id="KW-1185">Reference proteome</keyword>
<evidence type="ECO:0000305" key="1"/>
<comment type="similarity">
    <text evidence="1">Belongs to the UPF0102 family.</text>
</comment>
<protein>
    <recommendedName>
        <fullName>UPF0102 protein sll0189</fullName>
    </recommendedName>
</protein>
<dbReference type="EMBL" id="BA000022">
    <property type="protein sequence ID" value="BAA10408.1"/>
    <property type="molecule type" value="Genomic_DNA"/>
</dbReference>
<dbReference type="PIR" id="S76562">
    <property type="entry name" value="S76562"/>
</dbReference>
<dbReference type="SMR" id="Q55761"/>
<dbReference type="IntAct" id="Q55761">
    <property type="interactions" value="2"/>
</dbReference>
<dbReference type="STRING" id="1148.gene:10499909"/>
<dbReference type="PaxDb" id="1148-1001673"/>
<dbReference type="EnsemblBacteria" id="BAA10408">
    <property type="protein sequence ID" value="BAA10408"/>
    <property type="gene ID" value="BAA10408"/>
</dbReference>
<dbReference type="KEGG" id="syn:sll0189"/>
<dbReference type="eggNOG" id="COG0792">
    <property type="taxonomic scope" value="Bacteria"/>
</dbReference>
<dbReference type="InParanoid" id="Q55761"/>
<dbReference type="PhylomeDB" id="Q55761"/>
<dbReference type="Proteomes" id="UP000001425">
    <property type="component" value="Chromosome"/>
</dbReference>
<dbReference type="GO" id="GO:0003676">
    <property type="term" value="F:nucleic acid binding"/>
    <property type="evidence" value="ECO:0007669"/>
    <property type="project" value="InterPro"/>
</dbReference>
<dbReference type="CDD" id="cd20736">
    <property type="entry name" value="PoNe_Nuclease"/>
    <property type="match status" value="1"/>
</dbReference>
<dbReference type="Gene3D" id="3.40.1350.10">
    <property type="match status" value="1"/>
</dbReference>
<dbReference type="HAMAP" id="MF_00048">
    <property type="entry name" value="UPF0102"/>
    <property type="match status" value="1"/>
</dbReference>
<dbReference type="InterPro" id="IPR011335">
    <property type="entry name" value="Restrct_endonuc-II-like"/>
</dbReference>
<dbReference type="InterPro" id="IPR011856">
    <property type="entry name" value="tRNA_endonuc-like_dom_sf"/>
</dbReference>
<dbReference type="InterPro" id="IPR003509">
    <property type="entry name" value="UPF0102_YraN-like"/>
</dbReference>
<dbReference type="NCBIfam" id="TIGR00252">
    <property type="entry name" value="YraN family protein"/>
    <property type="match status" value="1"/>
</dbReference>
<dbReference type="PANTHER" id="PTHR34039">
    <property type="entry name" value="UPF0102 PROTEIN YRAN"/>
    <property type="match status" value="1"/>
</dbReference>
<dbReference type="PANTHER" id="PTHR34039:SF1">
    <property type="entry name" value="UPF0102 PROTEIN YRAN"/>
    <property type="match status" value="1"/>
</dbReference>
<dbReference type="Pfam" id="PF02021">
    <property type="entry name" value="UPF0102"/>
    <property type="match status" value="1"/>
</dbReference>
<dbReference type="SUPFAM" id="SSF52980">
    <property type="entry name" value="Restriction endonuclease-like"/>
    <property type="match status" value="1"/>
</dbReference>
<gene>
    <name type="ordered locus">sll0189</name>
</gene>